<evidence type="ECO:0000250" key="1"/>
<evidence type="ECO:0000250" key="2">
    <source>
        <dbReference type="UniProtKB" id="P25774"/>
    </source>
</evidence>
<evidence type="ECO:0000255" key="3"/>
<evidence type="ECO:0000255" key="4">
    <source>
        <dbReference type="PROSITE-ProRule" id="PRU10088"/>
    </source>
</evidence>
<evidence type="ECO:0000255" key="5">
    <source>
        <dbReference type="PROSITE-ProRule" id="PRU10089"/>
    </source>
</evidence>
<evidence type="ECO:0000255" key="6">
    <source>
        <dbReference type="PROSITE-ProRule" id="PRU10090"/>
    </source>
</evidence>
<dbReference type="EC" id="3.4.22.27"/>
<dbReference type="EMBL" id="AY156692">
    <property type="protein sequence ID" value="AAO13009.1"/>
    <property type="molecule type" value="mRNA"/>
</dbReference>
<dbReference type="RefSeq" id="NP_001002938.2">
    <property type="nucleotide sequence ID" value="NM_001002938.2"/>
</dbReference>
<dbReference type="SMR" id="Q8HY81"/>
<dbReference type="FunCoup" id="Q8HY81">
    <property type="interactions" value="235"/>
</dbReference>
<dbReference type="STRING" id="9615.ENSCAFP00000017782"/>
<dbReference type="GlyCosmos" id="Q8HY81">
    <property type="glycosylation" value="1 site, No reported glycans"/>
</dbReference>
<dbReference type="PaxDb" id="9612-ENSCAFP00000017782"/>
<dbReference type="GeneID" id="403400"/>
<dbReference type="KEGG" id="cfa:403400"/>
<dbReference type="CTD" id="1520"/>
<dbReference type="eggNOG" id="KOG1543">
    <property type="taxonomic scope" value="Eukaryota"/>
</dbReference>
<dbReference type="InParanoid" id="Q8HY81"/>
<dbReference type="OrthoDB" id="190265at2759"/>
<dbReference type="Proteomes" id="UP000002254">
    <property type="component" value="Unplaced"/>
</dbReference>
<dbReference type="Proteomes" id="UP000694429">
    <property type="component" value="Unplaced"/>
</dbReference>
<dbReference type="Proteomes" id="UP000694542">
    <property type="component" value="Unplaced"/>
</dbReference>
<dbReference type="Proteomes" id="UP000805418">
    <property type="component" value="Unplaced"/>
</dbReference>
<dbReference type="GO" id="GO:0005615">
    <property type="term" value="C:extracellular space"/>
    <property type="evidence" value="ECO:0000250"/>
    <property type="project" value="UniProtKB"/>
</dbReference>
<dbReference type="GO" id="GO:0005764">
    <property type="term" value="C:lysosome"/>
    <property type="evidence" value="ECO:0000318"/>
    <property type="project" value="GO_Central"/>
</dbReference>
<dbReference type="GO" id="GO:0045335">
    <property type="term" value="C:phagocytic vesicle"/>
    <property type="evidence" value="ECO:0000250"/>
    <property type="project" value="UniProtKB"/>
</dbReference>
<dbReference type="GO" id="GO:0004197">
    <property type="term" value="F:cysteine-type endopeptidase activity"/>
    <property type="evidence" value="ECO:0000318"/>
    <property type="project" value="GO_Central"/>
</dbReference>
<dbReference type="GO" id="GO:0019886">
    <property type="term" value="P:antigen processing and presentation of exogenous peptide antigen via MHC class II"/>
    <property type="evidence" value="ECO:0000250"/>
    <property type="project" value="UniProtKB"/>
</dbReference>
<dbReference type="GO" id="GO:0051603">
    <property type="term" value="P:proteolysis involved in protein catabolic process"/>
    <property type="evidence" value="ECO:0000318"/>
    <property type="project" value="GO_Central"/>
</dbReference>
<dbReference type="CDD" id="cd02248">
    <property type="entry name" value="Peptidase_C1A"/>
    <property type="match status" value="1"/>
</dbReference>
<dbReference type="FunFam" id="1.10.287.2250:FF:000003">
    <property type="entry name" value="Cathepsin L"/>
    <property type="match status" value="1"/>
</dbReference>
<dbReference type="FunFam" id="3.90.70.10:FF:000006">
    <property type="entry name" value="Cathepsin S"/>
    <property type="match status" value="1"/>
</dbReference>
<dbReference type="Gene3D" id="3.90.70.10">
    <property type="entry name" value="Cysteine proteinases"/>
    <property type="match status" value="1"/>
</dbReference>
<dbReference type="InterPro" id="IPR038765">
    <property type="entry name" value="Papain-like_cys_pep_sf"/>
</dbReference>
<dbReference type="InterPro" id="IPR025661">
    <property type="entry name" value="Pept_asp_AS"/>
</dbReference>
<dbReference type="InterPro" id="IPR000169">
    <property type="entry name" value="Pept_cys_AS"/>
</dbReference>
<dbReference type="InterPro" id="IPR025660">
    <property type="entry name" value="Pept_his_AS"/>
</dbReference>
<dbReference type="InterPro" id="IPR013128">
    <property type="entry name" value="Peptidase_C1A"/>
</dbReference>
<dbReference type="InterPro" id="IPR000668">
    <property type="entry name" value="Peptidase_C1A_C"/>
</dbReference>
<dbReference type="InterPro" id="IPR039417">
    <property type="entry name" value="Peptidase_C1A_papain-like"/>
</dbReference>
<dbReference type="InterPro" id="IPR013201">
    <property type="entry name" value="Prot_inhib_I29"/>
</dbReference>
<dbReference type="PANTHER" id="PTHR12411">
    <property type="entry name" value="CYSTEINE PROTEASE FAMILY C1-RELATED"/>
    <property type="match status" value="1"/>
</dbReference>
<dbReference type="Pfam" id="PF08246">
    <property type="entry name" value="Inhibitor_I29"/>
    <property type="match status" value="1"/>
</dbReference>
<dbReference type="Pfam" id="PF00112">
    <property type="entry name" value="Peptidase_C1"/>
    <property type="match status" value="1"/>
</dbReference>
<dbReference type="PRINTS" id="PR00705">
    <property type="entry name" value="PAPAIN"/>
</dbReference>
<dbReference type="SMART" id="SM00848">
    <property type="entry name" value="Inhibitor_I29"/>
    <property type="match status" value="1"/>
</dbReference>
<dbReference type="SMART" id="SM00645">
    <property type="entry name" value="Pept_C1"/>
    <property type="match status" value="1"/>
</dbReference>
<dbReference type="SUPFAM" id="SSF54001">
    <property type="entry name" value="Cysteine proteinases"/>
    <property type="match status" value="1"/>
</dbReference>
<dbReference type="PROSITE" id="PS00640">
    <property type="entry name" value="THIOL_PROTEASE_ASN"/>
    <property type="match status" value="1"/>
</dbReference>
<dbReference type="PROSITE" id="PS00139">
    <property type="entry name" value="THIOL_PROTEASE_CYS"/>
    <property type="match status" value="1"/>
</dbReference>
<dbReference type="PROSITE" id="PS00639">
    <property type="entry name" value="THIOL_PROTEASE_HIS"/>
    <property type="match status" value="1"/>
</dbReference>
<accession>Q8HY81</accession>
<name>CATS_CANLF</name>
<organism>
    <name type="scientific">Canis lupus familiaris</name>
    <name type="common">Dog</name>
    <name type="synonym">Canis familiaris</name>
    <dbReference type="NCBI Taxonomy" id="9615"/>
    <lineage>
        <taxon>Eukaryota</taxon>
        <taxon>Metazoa</taxon>
        <taxon>Chordata</taxon>
        <taxon>Craniata</taxon>
        <taxon>Vertebrata</taxon>
        <taxon>Euteleostomi</taxon>
        <taxon>Mammalia</taxon>
        <taxon>Eutheria</taxon>
        <taxon>Laurasiatheria</taxon>
        <taxon>Carnivora</taxon>
        <taxon>Caniformia</taxon>
        <taxon>Canidae</taxon>
        <taxon>Canis</taxon>
    </lineage>
</organism>
<reference key="1">
    <citation type="journal article" date="2003" name="Protein Expr. Purif.">
        <title>Cloning, expression, purification, and activity of dog (Canis familiaris) and monkey (Saimiri boliviensis) cathepsin S.</title>
        <authorList>
            <person name="Baker S.M."/>
            <person name="Karlsson L."/>
            <person name="Thurmond R.L."/>
        </authorList>
    </citation>
    <scope>NUCLEOTIDE SEQUENCE [MRNA]</scope>
</reference>
<gene>
    <name type="primary">CTSS</name>
</gene>
<sequence>MKWLVGLLPLCSYAVAQVHKDPTLDHHWNLWKKTYSKQYKEENEEVARRLIWEKNLKFVMLHNLEHSMGMHSYDLGMNHLGDMTGEEVISLMGSLRVPSQWQRNVTYRSNSNQKLPDSVDWREKGCVTEVKYQGSCGACWAFSAVGALEAQLKLKTGKLVSLSAQNLVDCSTEKYGNKGCNGGFMTTAFQYIIDNNGIDSEASYPYKAMNGKCRYDSKKRAATCSKYTELPFGSEDALKEAVANKGPVSVAIDASHYSFFLYRSGVYYEPSCTQNVNHGVLVVGYGNLNGKDYWLVKNSWGLNFGDQGYIRMARNSGNHCGIASYPSYPEI</sequence>
<protein>
    <recommendedName>
        <fullName>Cathepsin S</fullName>
        <ecNumber>3.4.22.27</ecNumber>
    </recommendedName>
</protein>
<comment type="function">
    <text evidence="2">Thiol protease. Key protease responsible for the removal of the invariant chain from MHC class II molecules and MHC class II antigen presentation. The bond-specificity of this proteinase is in part similar to the specificities of cathepsin L.</text>
</comment>
<comment type="catalytic activity">
    <reaction>
        <text>Similar to cathepsin L, but with much less activity on Z-Phe-Arg-|-NHMec, and more activity on the Z-Val-Val-Arg-|-Xaa compound.</text>
        <dbReference type="EC" id="3.4.22.27"/>
    </reaction>
</comment>
<comment type="subcellular location">
    <subcellularLocation>
        <location evidence="2">Lysosome</location>
    </subcellularLocation>
    <subcellularLocation>
        <location evidence="2">Secreted</location>
    </subcellularLocation>
    <subcellularLocation>
        <location evidence="2">Cytoplasmic vesicle</location>
        <location evidence="2">Phagosome</location>
    </subcellularLocation>
</comment>
<comment type="similarity">
    <text evidence="4 5 6">Belongs to the peptidase C1 family.</text>
</comment>
<keyword id="KW-0968">Cytoplasmic vesicle</keyword>
<keyword id="KW-1015">Disulfide bond</keyword>
<keyword id="KW-0325">Glycoprotein</keyword>
<keyword id="KW-0378">Hydrolase</keyword>
<keyword id="KW-0458">Lysosome</keyword>
<keyword id="KW-0645">Protease</keyword>
<keyword id="KW-1185">Reference proteome</keyword>
<keyword id="KW-0964">Secreted</keyword>
<keyword id="KW-0732">Signal</keyword>
<keyword id="KW-0788">Thiol protease</keyword>
<keyword id="KW-0865">Zymogen</keyword>
<proteinExistence type="evidence at transcript level"/>
<feature type="signal peptide" evidence="3">
    <location>
        <begin position="1"/>
        <end position="16"/>
    </location>
</feature>
<feature type="propeptide" id="PRO_0000026311" description="Activation peptide" evidence="1">
    <location>
        <begin position="17"/>
        <end position="114"/>
    </location>
</feature>
<feature type="chain" id="PRO_0000026312" description="Cathepsin S">
    <location>
        <begin position="115"/>
        <end position="331"/>
    </location>
</feature>
<feature type="active site" evidence="1">
    <location>
        <position position="139"/>
    </location>
</feature>
<feature type="active site" evidence="1">
    <location>
        <position position="278"/>
    </location>
</feature>
<feature type="active site" evidence="1">
    <location>
        <position position="298"/>
    </location>
</feature>
<feature type="glycosylation site" description="N-linked (GlcNAc...) asparagine" evidence="3">
    <location>
        <position position="104"/>
    </location>
</feature>
<feature type="disulfide bond" evidence="1">
    <location>
        <begin position="126"/>
        <end position="224"/>
    </location>
</feature>
<feature type="disulfide bond" evidence="1">
    <location>
        <begin position="136"/>
        <end position="180"/>
    </location>
</feature>
<feature type="disulfide bond" evidence="1">
    <location>
        <begin position="170"/>
        <end position="213"/>
    </location>
</feature>
<feature type="disulfide bond" evidence="1">
    <location>
        <begin position="272"/>
        <end position="320"/>
    </location>
</feature>